<organism>
    <name type="scientific">Rickettsia prowazekii (strain Madrid E)</name>
    <dbReference type="NCBI Taxonomy" id="272947"/>
    <lineage>
        <taxon>Bacteria</taxon>
        <taxon>Pseudomonadati</taxon>
        <taxon>Pseudomonadota</taxon>
        <taxon>Alphaproteobacteria</taxon>
        <taxon>Rickettsiales</taxon>
        <taxon>Rickettsiaceae</taxon>
        <taxon>Rickettsieae</taxon>
        <taxon>Rickettsia</taxon>
        <taxon>typhus group</taxon>
    </lineage>
</organism>
<reference key="1">
    <citation type="journal article" date="1998" name="Nature">
        <title>The genome sequence of Rickettsia prowazekii and the origin of mitochondria.</title>
        <authorList>
            <person name="Andersson S.G.E."/>
            <person name="Zomorodipour A."/>
            <person name="Andersson J.O."/>
            <person name="Sicheritz-Ponten T."/>
            <person name="Alsmark U.C.M."/>
            <person name="Podowski R.M."/>
            <person name="Naeslund A.K."/>
            <person name="Eriksson A.-S."/>
            <person name="Winkler H.H."/>
            <person name="Kurland C.G."/>
        </authorList>
    </citation>
    <scope>NUCLEOTIDE SEQUENCE [LARGE SCALE GENOMIC DNA]</scope>
    <source>
        <strain>Madrid E</strain>
    </source>
</reference>
<comment type="subcellular location">
    <subcellularLocation>
        <location evidence="2">Cell membrane</location>
        <topology evidence="2">Multi-pass membrane protein</topology>
    </subcellularLocation>
</comment>
<comment type="similarity">
    <text evidence="2">Belongs to the BI1 family.</text>
</comment>
<evidence type="ECO:0000255" key="1"/>
<evidence type="ECO:0000305" key="2"/>
<gene>
    <name type="ordered locus">RP147</name>
</gene>
<proteinExistence type="inferred from homology"/>
<sequence>MIDYTKTLTTTSKNKTFDEGLRRYMLKVYNYMALALLLTGVAAITTISVEPIYHLMFQTGFGTIIMFAPLGIALYFFMGFGRMNLQTAQILFWVYAGLTGMSLSYLALIYTGTSIARTFFICSSVFGAMSLYGYSTSRDLTSMGSFFAMGLIGLIIASLVNLFLKSSSLSFATSLIGIVVFMGLIAWDTQKIKSMYYIAGNDEVGQKLSIMAAFTLYLDFINLFLYLMRFLGNRRD</sequence>
<protein>
    <recommendedName>
        <fullName>Uncharacterized protein RP147</fullName>
    </recommendedName>
</protein>
<feature type="chain" id="PRO_0000179112" description="Uncharacterized protein RP147">
    <location>
        <begin position="1"/>
        <end position="236"/>
    </location>
</feature>
<feature type="transmembrane region" description="Helical" evidence="1">
    <location>
        <begin position="32"/>
        <end position="52"/>
    </location>
</feature>
<feature type="transmembrane region" description="Helical" evidence="1">
    <location>
        <begin position="61"/>
        <end position="81"/>
    </location>
</feature>
<feature type="transmembrane region" description="Helical" evidence="1">
    <location>
        <begin position="90"/>
        <end position="110"/>
    </location>
</feature>
<feature type="transmembrane region" description="Helical" evidence="1">
    <location>
        <begin position="115"/>
        <end position="135"/>
    </location>
</feature>
<feature type="transmembrane region" description="Helical" evidence="1">
    <location>
        <begin position="144"/>
        <end position="164"/>
    </location>
</feature>
<feature type="transmembrane region" description="Helical" evidence="1">
    <location>
        <begin position="167"/>
        <end position="187"/>
    </location>
</feature>
<feature type="transmembrane region" description="Helical" evidence="1">
    <location>
        <begin position="208"/>
        <end position="228"/>
    </location>
</feature>
<accession>Q9ZE15</accession>
<dbReference type="EMBL" id="AJ235270">
    <property type="protein sequence ID" value="CAA14615.1"/>
    <property type="molecule type" value="Genomic_DNA"/>
</dbReference>
<dbReference type="PIR" id="H71724">
    <property type="entry name" value="H71724"/>
</dbReference>
<dbReference type="RefSeq" id="NP_220538.1">
    <property type="nucleotide sequence ID" value="NC_000963.1"/>
</dbReference>
<dbReference type="RefSeq" id="WP_004597207.1">
    <property type="nucleotide sequence ID" value="NC_000963.1"/>
</dbReference>
<dbReference type="SMR" id="Q9ZE15"/>
<dbReference type="STRING" id="272947.gene:17555230"/>
<dbReference type="EnsemblBacteria" id="CAA14615">
    <property type="protein sequence ID" value="CAA14615"/>
    <property type="gene ID" value="CAA14615"/>
</dbReference>
<dbReference type="KEGG" id="rpr:RP147"/>
<dbReference type="PATRIC" id="fig|272947.5.peg.152"/>
<dbReference type="eggNOG" id="COG0670">
    <property type="taxonomic scope" value="Bacteria"/>
</dbReference>
<dbReference type="HOGENOM" id="CLU_058671_1_1_5"/>
<dbReference type="OrthoDB" id="9793828at2"/>
<dbReference type="Proteomes" id="UP000002480">
    <property type="component" value="Chromosome"/>
</dbReference>
<dbReference type="GO" id="GO:0005886">
    <property type="term" value="C:plasma membrane"/>
    <property type="evidence" value="ECO:0007669"/>
    <property type="project" value="UniProtKB-SubCell"/>
</dbReference>
<dbReference type="CDD" id="cd10432">
    <property type="entry name" value="BI-1-like_bacterial"/>
    <property type="match status" value="1"/>
</dbReference>
<dbReference type="InterPro" id="IPR006214">
    <property type="entry name" value="Bax_inhibitor_1-related"/>
</dbReference>
<dbReference type="PANTHER" id="PTHR23291">
    <property type="entry name" value="BAX INHIBITOR-RELATED"/>
    <property type="match status" value="1"/>
</dbReference>
<dbReference type="PANTHER" id="PTHR23291:SF50">
    <property type="entry name" value="PROTEIN LIFEGUARD 4"/>
    <property type="match status" value="1"/>
</dbReference>
<dbReference type="Pfam" id="PF01027">
    <property type="entry name" value="Bax1-I"/>
    <property type="match status" value="1"/>
</dbReference>
<name>Y147_RICPR</name>
<keyword id="KW-1003">Cell membrane</keyword>
<keyword id="KW-0472">Membrane</keyword>
<keyword id="KW-1185">Reference proteome</keyword>
<keyword id="KW-0812">Transmembrane</keyword>
<keyword id="KW-1133">Transmembrane helix</keyword>